<comment type="function">
    <text evidence="1">Catalyzes the attachment of threonine to tRNA(Thr) in a two-step reaction: L-threonine is first activated by ATP to form Thr-AMP and then transferred to the acceptor end of tRNA(Thr). Also edits incorrectly charged L-seryl-tRNA(Thr).</text>
</comment>
<comment type="catalytic activity">
    <reaction evidence="1">
        <text>tRNA(Thr) + L-threonine + ATP = L-threonyl-tRNA(Thr) + AMP + diphosphate + H(+)</text>
        <dbReference type="Rhea" id="RHEA:24624"/>
        <dbReference type="Rhea" id="RHEA-COMP:9670"/>
        <dbReference type="Rhea" id="RHEA-COMP:9704"/>
        <dbReference type="ChEBI" id="CHEBI:15378"/>
        <dbReference type="ChEBI" id="CHEBI:30616"/>
        <dbReference type="ChEBI" id="CHEBI:33019"/>
        <dbReference type="ChEBI" id="CHEBI:57926"/>
        <dbReference type="ChEBI" id="CHEBI:78442"/>
        <dbReference type="ChEBI" id="CHEBI:78534"/>
        <dbReference type="ChEBI" id="CHEBI:456215"/>
        <dbReference type="EC" id="6.1.1.3"/>
    </reaction>
</comment>
<comment type="cofactor">
    <cofactor evidence="1">
        <name>Zn(2+)</name>
        <dbReference type="ChEBI" id="CHEBI:29105"/>
    </cofactor>
    <text evidence="1">Binds 1 zinc ion per subunit.</text>
</comment>
<comment type="subunit">
    <text evidence="1">Homodimer.</text>
</comment>
<comment type="subcellular location">
    <subcellularLocation>
        <location evidence="1">Cytoplasm</location>
    </subcellularLocation>
</comment>
<comment type="similarity">
    <text evidence="1">Belongs to the class-II aminoacyl-tRNA synthetase family.</text>
</comment>
<accession>C4ZYI1</accession>
<sequence>MPVITLPDGSQRHYDHAVSPMDVALDIGPGLAKACIAGRVNGELVDACDLIENDAQLSIITAKDEEGLEIIRHSCAHLLGHAIKQLWPHTKMAIGPVIDNGFYYDVDLDRTLTQEDVEALEKRMHELAEKNYDVIKKKVSWHEARETFANRGESYKVSILDENIAHDDKPGLYFHEEYVDMCRGPHVPNMRFCHHFKLMKTAGAYWRGDSNNKMLQRIYGTAWADKKALNAYLQRLEEAAKRDHRKIGKQLDLYHMQEEAPGMVFWHNDGWTIFRELEVFVRSKLKEYQYQEVKGPFMMDRVLWEKTGHWDNYKDAMFTTSSENREYCIKPMNCPGHVQIFNQGLKSYRDLPLRMAEFGSCHRNEPSGSLHGLMRVRGFTQDDAHIFCTEEQIRDEVNGCIRLVYDMYSTFGFEKIVVKLSTRPEKRIGSDEMWDRAEADLAVALEENNIPFEYQLGEGAFYGPKIEFTLYDCLDRAWQCGTVQLDFSLPSRLSASYVGEDNERKVPVMIHRAILGSMERFIGILTEEFAGFFPTWLAPVQVVIMNITDSQSEYVNELTQKLSNAGIRVKADLRNEKIGFKIREHTLRRVPYMLVCGDKEVESGKVAVRTRRGKDLGSMDVNEVIEKLQQEIRSRSLKQLEE</sequence>
<dbReference type="EC" id="6.1.1.3" evidence="1"/>
<dbReference type="EMBL" id="CP001396">
    <property type="protein sequence ID" value="ACR65655.1"/>
    <property type="molecule type" value="Genomic_DNA"/>
</dbReference>
<dbReference type="RefSeq" id="WP_001144202.1">
    <property type="nucleotide sequence ID" value="NC_012759.1"/>
</dbReference>
<dbReference type="SMR" id="C4ZYI1"/>
<dbReference type="GeneID" id="93775932"/>
<dbReference type="KEGG" id="ebw:BWG_1533"/>
<dbReference type="HOGENOM" id="CLU_008554_0_1_6"/>
<dbReference type="GO" id="GO:0005829">
    <property type="term" value="C:cytosol"/>
    <property type="evidence" value="ECO:0007669"/>
    <property type="project" value="TreeGrafter"/>
</dbReference>
<dbReference type="GO" id="GO:0005524">
    <property type="term" value="F:ATP binding"/>
    <property type="evidence" value="ECO:0007669"/>
    <property type="project" value="UniProtKB-UniRule"/>
</dbReference>
<dbReference type="GO" id="GO:0046872">
    <property type="term" value="F:metal ion binding"/>
    <property type="evidence" value="ECO:0007669"/>
    <property type="project" value="UniProtKB-KW"/>
</dbReference>
<dbReference type="GO" id="GO:0004829">
    <property type="term" value="F:threonine-tRNA ligase activity"/>
    <property type="evidence" value="ECO:0007669"/>
    <property type="project" value="UniProtKB-UniRule"/>
</dbReference>
<dbReference type="GO" id="GO:0000049">
    <property type="term" value="F:tRNA binding"/>
    <property type="evidence" value="ECO:0007669"/>
    <property type="project" value="UniProtKB-KW"/>
</dbReference>
<dbReference type="GO" id="GO:0006435">
    <property type="term" value="P:threonyl-tRNA aminoacylation"/>
    <property type="evidence" value="ECO:0007669"/>
    <property type="project" value="UniProtKB-UniRule"/>
</dbReference>
<dbReference type="CDD" id="cd01667">
    <property type="entry name" value="TGS_ThrRS"/>
    <property type="match status" value="1"/>
</dbReference>
<dbReference type="CDD" id="cd00860">
    <property type="entry name" value="ThrRS_anticodon"/>
    <property type="match status" value="1"/>
</dbReference>
<dbReference type="CDD" id="cd00771">
    <property type="entry name" value="ThrRS_core"/>
    <property type="match status" value="1"/>
</dbReference>
<dbReference type="FunFam" id="3.10.20.30:FF:000005">
    <property type="entry name" value="Threonine--tRNA ligase"/>
    <property type="match status" value="1"/>
</dbReference>
<dbReference type="FunFam" id="3.30.54.20:FF:000002">
    <property type="entry name" value="Threonine--tRNA ligase"/>
    <property type="match status" value="1"/>
</dbReference>
<dbReference type="FunFam" id="3.30.930.10:FF:000002">
    <property type="entry name" value="Threonine--tRNA ligase"/>
    <property type="match status" value="1"/>
</dbReference>
<dbReference type="FunFam" id="3.40.50.800:FF:000001">
    <property type="entry name" value="Threonine--tRNA ligase"/>
    <property type="match status" value="1"/>
</dbReference>
<dbReference type="FunFam" id="3.30.980.10:FF:000005">
    <property type="entry name" value="Threonyl-tRNA synthetase, mitochondrial"/>
    <property type="match status" value="1"/>
</dbReference>
<dbReference type="Gene3D" id="3.10.20.30">
    <property type="match status" value="1"/>
</dbReference>
<dbReference type="Gene3D" id="3.30.54.20">
    <property type="match status" value="1"/>
</dbReference>
<dbReference type="Gene3D" id="3.40.50.800">
    <property type="entry name" value="Anticodon-binding domain"/>
    <property type="match status" value="1"/>
</dbReference>
<dbReference type="Gene3D" id="3.30.930.10">
    <property type="entry name" value="Bira Bifunctional Protein, Domain 2"/>
    <property type="match status" value="1"/>
</dbReference>
<dbReference type="Gene3D" id="3.30.980.10">
    <property type="entry name" value="Threonyl-trna Synthetase, Chain A, domain 2"/>
    <property type="match status" value="1"/>
</dbReference>
<dbReference type="HAMAP" id="MF_00184">
    <property type="entry name" value="Thr_tRNA_synth"/>
    <property type="match status" value="1"/>
</dbReference>
<dbReference type="InterPro" id="IPR002314">
    <property type="entry name" value="aa-tRNA-synt_IIb"/>
</dbReference>
<dbReference type="InterPro" id="IPR006195">
    <property type="entry name" value="aa-tRNA-synth_II"/>
</dbReference>
<dbReference type="InterPro" id="IPR045864">
    <property type="entry name" value="aa-tRNA-synth_II/BPL/LPL"/>
</dbReference>
<dbReference type="InterPro" id="IPR004154">
    <property type="entry name" value="Anticodon-bd"/>
</dbReference>
<dbReference type="InterPro" id="IPR036621">
    <property type="entry name" value="Anticodon-bd_dom_sf"/>
</dbReference>
<dbReference type="InterPro" id="IPR012675">
    <property type="entry name" value="Beta-grasp_dom_sf"/>
</dbReference>
<dbReference type="InterPro" id="IPR004095">
    <property type="entry name" value="TGS"/>
</dbReference>
<dbReference type="InterPro" id="IPR012676">
    <property type="entry name" value="TGS-like"/>
</dbReference>
<dbReference type="InterPro" id="IPR002320">
    <property type="entry name" value="Thr-tRNA-ligase_IIa"/>
</dbReference>
<dbReference type="InterPro" id="IPR018163">
    <property type="entry name" value="Thr/Ala-tRNA-synth_IIc_edit"/>
</dbReference>
<dbReference type="InterPro" id="IPR047246">
    <property type="entry name" value="ThrRS_anticodon"/>
</dbReference>
<dbReference type="InterPro" id="IPR033728">
    <property type="entry name" value="ThrRS_core"/>
</dbReference>
<dbReference type="InterPro" id="IPR012947">
    <property type="entry name" value="tRNA_SAD"/>
</dbReference>
<dbReference type="NCBIfam" id="TIGR00418">
    <property type="entry name" value="thrS"/>
    <property type="match status" value="1"/>
</dbReference>
<dbReference type="PANTHER" id="PTHR11451:SF44">
    <property type="entry name" value="THREONINE--TRNA LIGASE, CHLOROPLASTIC_MITOCHONDRIAL 2"/>
    <property type="match status" value="1"/>
</dbReference>
<dbReference type="PANTHER" id="PTHR11451">
    <property type="entry name" value="THREONINE-TRNA LIGASE"/>
    <property type="match status" value="1"/>
</dbReference>
<dbReference type="Pfam" id="PF03129">
    <property type="entry name" value="HGTP_anticodon"/>
    <property type="match status" value="1"/>
</dbReference>
<dbReference type="Pfam" id="PF02824">
    <property type="entry name" value="TGS"/>
    <property type="match status" value="1"/>
</dbReference>
<dbReference type="Pfam" id="PF00587">
    <property type="entry name" value="tRNA-synt_2b"/>
    <property type="match status" value="1"/>
</dbReference>
<dbReference type="Pfam" id="PF07973">
    <property type="entry name" value="tRNA_SAD"/>
    <property type="match status" value="1"/>
</dbReference>
<dbReference type="PRINTS" id="PR01047">
    <property type="entry name" value="TRNASYNTHTHR"/>
</dbReference>
<dbReference type="SMART" id="SM00863">
    <property type="entry name" value="tRNA_SAD"/>
    <property type="match status" value="1"/>
</dbReference>
<dbReference type="SUPFAM" id="SSF52954">
    <property type="entry name" value="Class II aaRS ABD-related"/>
    <property type="match status" value="1"/>
</dbReference>
<dbReference type="SUPFAM" id="SSF55681">
    <property type="entry name" value="Class II aaRS and biotin synthetases"/>
    <property type="match status" value="1"/>
</dbReference>
<dbReference type="SUPFAM" id="SSF81271">
    <property type="entry name" value="TGS-like"/>
    <property type="match status" value="1"/>
</dbReference>
<dbReference type="SUPFAM" id="SSF55186">
    <property type="entry name" value="ThrRS/AlaRS common domain"/>
    <property type="match status" value="1"/>
</dbReference>
<dbReference type="PROSITE" id="PS50862">
    <property type="entry name" value="AA_TRNA_LIGASE_II"/>
    <property type="match status" value="1"/>
</dbReference>
<dbReference type="PROSITE" id="PS51880">
    <property type="entry name" value="TGS"/>
    <property type="match status" value="1"/>
</dbReference>
<proteinExistence type="inferred from homology"/>
<gene>
    <name evidence="1" type="primary">thrS</name>
    <name type="ordered locus">BWG_1533</name>
</gene>
<evidence type="ECO:0000255" key="1">
    <source>
        <dbReference type="HAMAP-Rule" id="MF_00184"/>
    </source>
</evidence>
<evidence type="ECO:0000255" key="2">
    <source>
        <dbReference type="PROSITE-ProRule" id="PRU01228"/>
    </source>
</evidence>
<name>SYT_ECOBW</name>
<protein>
    <recommendedName>
        <fullName evidence="1">Threonine--tRNA ligase</fullName>
        <ecNumber evidence="1">6.1.1.3</ecNumber>
    </recommendedName>
    <alternativeName>
        <fullName evidence="1">Threonyl-tRNA synthetase</fullName>
        <shortName evidence="1">ThrRS</shortName>
    </alternativeName>
</protein>
<organism>
    <name type="scientific">Escherichia coli (strain K12 / MC4100 / BW2952)</name>
    <dbReference type="NCBI Taxonomy" id="595496"/>
    <lineage>
        <taxon>Bacteria</taxon>
        <taxon>Pseudomonadati</taxon>
        <taxon>Pseudomonadota</taxon>
        <taxon>Gammaproteobacteria</taxon>
        <taxon>Enterobacterales</taxon>
        <taxon>Enterobacteriaceae</taxon>
        <taxon>Escherichia</taxon>
    </lineage>
</organism>
<keyword id="KW-0007">Acetylation</keyword>
<keyword id="KW-0030">Aminoacyl-tRNA synthetase</keyword>
<keyword id="KW-0067">ATP-binding</keyword>
<keyword id="KW-0963">Cytoplasm</keyword>
<keyword id="KW-0436">Ligase</keyword>
<keyword id="KW-0479">Metal-binding</keyword>
<keyword id="KW-0547">Nucleotide-binding</keyword>
<keyword id="KW-0648">Protein biosynthesis</keyword>
<keyword id="KW-0694">RNA-binding</keyword>
<keyword id="KW-0820">tRNA-binding</keyword>
<keyword id="KW-0862">Zinc</keyword>
<feature type="chain" id="PRO_1000203903" description="Threonine--tRNA ligase">
    <location>
        <begin position="1"/>
        <end position="642"/>
    </location>
</feature>
<feature type="domain" description="TGS" evidence="2">
    <location>
        <begin position="1"/>
        <end position="61"/>
    </location>
</feature>
<feature type="region of interest" description="Catalytic" evidence="1">
    <location>
        <begin position="243"/>
        <end position="534"/>
    </location>
</feature>
<feature type="binding site" evidence="1">
    <location>
        <position position="334"/>
    </location>
    <ligand>
        <name>Zn(2+)</name>
        <dbReference type="ChEBI" id="CHEBI:29105"/>
    </ligand>
</feature>
<feature type="binding site" evidence="1">
    <location>
        <position position="385"/>
    </location>
    <ligand>
        <name>Zn(2+)</name>
        <dbReference type="ChEBI" id="CHEBI:29105"/>
    </ligand>
</feature>
<feature type="binding site" evidence="1">
    <location>
        <position position="511"/>
    </location>
    <ligand>
        <name>Zn(2+)</name>
        <dbReference type="ChEBI" id="CHEBI:29105"/>
    </ligand>
</feature>
<feature type="modified residue" description="N6-acetyllysine" evidence="1">
    <location>
        <position position="286"/>
    </location>
</feature>
<reference key="1">
    <citation type="journal article" date="2009" name="J. Bacteriol.">
        <title>Genomic sequencing reveals regulatory mutations and recombinational events in the widely used MC4100 lineage of Escherichia coli K-12.</title>
        <authorList>
            <person name="Ferenci T."/>
            <person name="Zhou Z."/>
            <person name="Betteridge T."/>
            <person name="Ren Y."/>
            <person name="Liu Y."/>
            <person name="Feng L."/>
            <person name="Reeves P.R."/>
            <person name="Wang L."/>
        </authorList>
    </citation>
    <scope>NUCLEOTIDE SEQUENCE [LARGE SCALE GENOMIC DNA]</scope>
    <source>
        <strain>K12 / MC4100 / BW2952</strain>
    </source>
</reference>